<feature type="chain" id="PRO_1000192760" description="Xaa-Pro dipeptidyl-peptidase">
    <location>
        <begin position="1"/>
        <end position="757"/>
    </location>
</feature>
<feature type="active site" description="Charge relay system" evidence="1">
    <location>
        <position position="348"/>
    </location>
</feature>
<feature type="active site" description="Charge relay system" evidence="1">
    <location>
        <position position="468"/>
    </location>
</feature>
<feature type="active site" description="Charge relay system" evidence="1">
    <location>
        <position position="498"/>
    </location>
</feature>
<gene>
    <name evidence="1" type="primary">pepX</name>
    <name type="ordered locus">SPP_0902</name>
</gene>
<reference key="1">
    <citation type="journal article" date="2010" name="Genome Biol.">
        <title>Structure and dynamics of the pan-genome of Streptococcus pneumoniae and closely related species.</title>
        <authorList>
            <person name="Donati C."/>
            <person name="Hiller N.L."/>
            <person name="Tettelin H."/>
            <person name="Muzzi A."/>
            <person name="Croucher N.J."/>
            <person name="Angiuoli S.V."/>
            <person name="Oggioni M."/>
            <person name="Dunning Hotopp J.C."/>
            <person name="Hu F.Z."/>
            <person name="Riley D.R."/>
            <person name="Covacci A."/>
            <person name="Mitchell T.J."/>
            <person name="Bentley S.D."/>
            <person name="Kilian M."/>
            <person name="Ehrlich G.D."/>
            <person name="Rappuoli R."/>
            <person name="Moxon E.R."/>
            <person name="Masignani V."/>
        </authorList>
    </citation>
    <scope>NUCLEOTIDE SEQUENCE [LARGE SCALE GENOMIC DNA]</scope>
    <source>
        <strain>P1031</strain>
    </source>
</reference>
<name>PEPX_STRZP</name>
<organism>
    <name type="scientific">Streptococcus pneumoniae (strain P1031)</name>
    <dbReference type="NCBI Taxonomy" id="488223"/>
    <lineage>
        <taxon>Bacteria</taxon>
        <taxon>Bacillati</taxon>
        <taxon>Bacillota</taxon>
        <taxon>Bacilli</taxon>
        <taxon>Lactobacillales</taxon>
        <taxon>Streptococcaceae</taxon>
        <taxon>Streptococcus</taxon>
    </lineage>
</organism>
<protein>
    <recommendedName>
        <fullName evidence="1">Xaa-Pro dipeptidyl-peptidase</fullName>
        <ecNumber evidence="1">3.4.14.11</ecNumber>
    </recommendedName>
    <alternativeName>
        <fullName evidence="1">X-Pro dipeptidyl-peptidase</fullName>
    </alternativeName>
    <alternativeName>
        <fullName evidence="1">X-prolyl-dipeptidyl aminopeptidase</fullName>
        <shortName evidence="1">X-PDAP</shortName>
    </alternativeName>
</protein>
<accession>C1CJY2</accession>
<evidence type="ECO:0000255" key="1">
    <source>
        <dbReference type="HAMAP-Rule" id="MF_00698"/>
    </source>
</evidence>
<comment type="function">
    <text evidence="1">Removes N-terminal dipeptides sequentially from polypeptides having unsubstituted N-termini provided that the penultimate residue is proline.</text>
</comment>
<comment type="catalytic activity">
    <reaction evidence="1">
        <text>Hydrolyzes Xaa-Pro-|- bonds to release unblocked, N-terminal dipeptides from substrates including Ala-Pro-|-p-nitroanilide and (sequentially) Tyr-Pro-|-Phe-Pro-|-Gly-Pro-|-Ile.</text>
        <dbReference type="EC" id="3.4.14.11"/>
    </reaction>
</comment>
<comment type="subunit">
    <text evidence="1">Homodimer.</text>
</comment>
<comment type="subcellular location">
    <subcellularLocation>
        <location evidence="1">Cytoplasm</location>
    </subcellularLocation>
</comment>
<comment type="similarity">
    <text evidence="1">Belongs to the peptidase S15 family.</text>
</comment>
<proteinExistence type="inferred from homology"/>
<sequence length="757" mass="86914">MRFNQYSYINFPKENVLSELKKCGFDLQNTANHKDSLETFLRRFFFTYQDTNYPLSILAADKKTDLLTFFQSEDELTADIFYTVAFQLLGFSYLVDFEDSDVFRKETGFPIIYGDLIENLYQLLNTRTKKGNTLIDQLVSDGLIPEDNDYHYFNGKSLATFSNQDVIREVVYVESRVDTDQKGLSDLVKVSIIRPRFDGKIPAIMTASPYHQGTNDKASDKALYKMEGELEVKLPHKIELEKPQLNLVQPQGQAELIAEAEEKLTHINSSYTLNDYFLPRGFANLYVSGVGTKDSTGFMTNGDYQQIEAYKNVIDWLNGRCRAFTDHTRQRQVKADWSNGKVATTGLSYLGTMSNGLATTGVDGLEVIIAEAGISSWYNYYRENGLVTSPGGYPGEDFDSLAELTYSRNLLAGDYIRGNEAHQADLEKVKAQLDRKTGDYNQFWHDRNYLLNAHKVKAEVVFTHGSQDWNVKPLHVYQMFHALPTHIHKHLFFHNGAHVYMNNWQSIDFRESINALLTKKLLGQETDFQLPTVIWQDNTAPQTWLSLDNFGGQENCKTFSLGQEEQAIQNQYPDKDFERYSKTYQTFNTELYQGKANQITINLPVTKDLHLNGRAQLNLRIKSSTNKGLLSAQLLEFGQKKYLQPYPAILSARTIDNGRYHMLENLCELPFRPEAQRVVTKGYLNLQNRNDLLLVEDITADEWMDVQFELQPTIYKLKEGDTLRLVLYTTDFEITIRDNTDYHLTVDLAQSMLTLPC</sequence>
<keyword id="KW-0031">Aminopeptidase</keyword>
<keyword id="KW-0963">Cytoplasm</keyword>
<keyword id="KW-0378">Hydrolase</keyword>
<keyword id="KW-0645">Protease</keyword>
<keyword id="KW-0720">Serine protease</keyword>
<dbReference type="EC" id="3.4.14.11" evidence="1"/>
<dbReference type="EMBL" id="CP000920">
    <property type="protein sequence ID" value="ACO21976.1"/>
    <property type="molecule type" value="Genomic_DNA"/>
</dbReference>
<dbReference type="RefSeq" id="WP_001212049.1">
    <property type="nucleotide sequence ID" value="NC_012467.1"/>
</dbReference>
<dbReference type="SMR" id="C1CJY2"/>
<dbReference type="ESTHER" id="strpn-pepx">
    <property type="family name" value="Lactobacillus_peptidase"/>
</dbReference>
<dbReference type="MEROPS" id="S15.001"/>
<dbReference type="KEGG" id="spp:SPP_0902"/>
<dbReference type="HOGENOM" id="CLU_011800_0_0_9"/>
<dbReference type="GO" id="GO:0005737">
    <property type="term" value="C:cytoplasm"/>
    <property type="evidence" value="ECO:0007669"/>
    <property type="project" value="UniProtKB-SubCell"/>
</dbReference>
<dbReference type="GO" id="GO:0004177">
    <property type="term" value="F:aminopeptidase activity"/>
    <property type="evidence" value="ECO:0007669"/>
    <property type="project" value="UniProtKB-KW"/>
</dbReference>
<dbReference type="GO" id="GO:0008239">
    <property type="term" value="F:dipeptidyl-peptidase activity"/>
    <property type="evidence" value="ECO:0007669"/>
    <property type="project" value="UniProtKB-UniRule"/>
</dbReference>
<dbReference type="GO" id="GO:0008236">
    <property type="term" value="F:serine-type peptidase activity"/>
    <property type="evidence" value="ECO:0007669"/>
    <property type="project" value="UniProtKB-KW"/>
</dbReference>
<dbReference type="GO" id="GO:0006508">
    <property type="term" value="P:proteolysis"/>
    <property type="evidence" value="ECO:0007669"/>
    <property type="project" value="UniProtKB-KW"/>
</dbReference>
<dbReference type="Gene3D" id="1.10.246.70">
    <property type="match status" value="1"/>
</dbReference>
<dbReference type="Gene3D" id="3.40.50.1820">
    <property type="entry name" value="alpha/beta hydrolase"/>
    <property type="match status" value="1"/>
</dbReference>
<dbReference type="Gene3D" id="2.60.120.260">
    <property type="entry name" value="Galactose-binding domain-like"/>
    <property type="match status" value="1"/>
</dbReference>
<dbReference type="HAMAP" id="MF_00698">
    <property type="entry name" value="Aminopeptidase_S15"/>
    <property type="match status" value="1"/>
</dbReference>
<dbReference type="InterPro" id="IPR029058">
    <property type="entry name" value="AB_hydrolase_fold"/>
</dbReference>
<dbReference type="InterPro" id="IPR008979">
    <property type="entry name" value="Galactose-bd-like_sf"/>
</dbReference>
<dbReference type="InterPro" id="IPR008252">
    <property type="entry name" value="Pept_S15_Xpro"/>
</dbReference>
<dbReference type="InterPro" id="IPR015251">
    <property type="entry name" value="PepX_N_dom"/>
</dbReference>
<dbReference type="InterPro" id="IPR036313">
    <property type="entry name" value="PepX_N_dom_sf"/>
</dbReference>
<dbReference type="InterPro" id="IPR000383">
    <property type="entry name" value="Xaa-Pro-like_dom"/>
</dbReference>
<dbReference type="InterPro" id="IPR013736">
    <property type="entry name" value="Xaa-Pro_dipept_C"/>
</dbReference>
<dbReference type="InterPro" id="IPR050585">
    <property type="entry name" value="Xaa-Pro_dipeptidyl-ppase/CocE"/>
</dbReference>
<dbReference type="NCBIfam" id="NF003783">
    <property type="entry name" value="PRK05371.1-4"/>
    <property type="match status" value="1"/>
</dbReference>
<dbReference type="PANTHER" id="PTHR43056:SF10">
    <property type="entry name" value="COCE_NOND FAMILY, PUTATIVE (AFU_ORTHOLOGUE AFUA_7G00600)-RELATED"/>
    <property type="match status" value="1"/>
</dbReference>
<dbReference type="PANTHER" id="PTHR43056">
    <property type="entry name" value="PEPTIDASE S9 PROLYL OLIGOPEPTIDASE"/>
    <property type="match status" value="1"/>
</dbReference>
<dbReference type="Pfam" id="PF02129">
    <property type="entry name" value="Peptidase_S15"/>
    <property type="match status" value="1"/>
</dbReference>
<dbReference type="Pfam" id="PF08530">
    <property type="entry name" value="PepX_C"/>
    <property type="match status" value="1"/>
</dbReference>
<dbReference type="Pfam" id="PF09168">
    <property type="entry name" value="PepX_N"/>
    <property type="match status" value="1"/>
</dbReference>
<dbReference type="PRINTS" id="PR00923">
    <property type="entry name" value="LACTOPTASE"/>
</dbReference>
<dbReference type="SMART" id="SM00939">
    <property type="entry name" value="PepX_C"/>
    <property type="match status" value="1"/>
</dbReference>
<dbReference type="SMART" id="SM00940">
    <property type="entry name" value="PepX_N"/>
    <property type="match status" value="1"/>
</dbReference>
<dbReference type="SUPFAM" id="SSF53474">
    <property type="entry name" value="alpha/beta-Hydrolases"/>
    <property type="match status" value="1"/>
</dbReference>
<dbReference type="SUPFAM" id="SSF49785">
    <property type="entry name" value="Galactose-binding domain-like"/>
    <property type="match status" value="1"/>
</dbReference>
<dbReference type="SUPFAM" id="SSF81761">
    <property type="entry name" value="X-Prolyl dipeptidyl aminopeptidase PepX, N-terminal domain"/>
    <property type="match status" value="1"/>
</dbReference>